<gene>
    <name type="ORF">ORF86</name>
</gene>
<keyword id="KW-1185">Reference proteome</keyword>
<organismHost>
    <name type="scientific">Magallana gigas</name>
    <name type="common">Pacific oyster</name>
    <name type="synonym">Crassostrea gigas</name>
    <dbReference type="NCBI Taxonomy" id="29159"/>
</organismHost>
<organismHost>
    <name type="scientific">Pecten maximus</name>
    <name type="common">King scallop</name>
    <name type="synonym">Pilgrim's clam</name>
    <dbReference type="NCBI Taxonomy" id="6579"/>
</organismHost>
<proteinExistence type="predicted"/>
<sequence>MATTKKLFVDRMTFILKLLKEDVDFAPCIRAAYIADGMKEFAFMKPDMDTPLEMALQILLKNHQGQELTSSQILGAVIYTYRYINELLTRHEKDRAVFDWAITAGLCGVNQYNWLKFQKDILSYKSITRGIPFSQ</sequence>
<dbReference type="EMBL" id="AY509253">
    <property type="protein sequence ID" value="AAS00972.1"/>
    <property type="molecule type" value="Genomic_DNA"/>
</dbReference>
<dbReference type="RefSeq" id="YP_024625.1">
    <property type="nucleotide sequence ID" value="NC_005881.2"/>
</dbReference>
<dbReference type="KEGG" id="vg:2948231"/>
<dbReference type="Proteomes" id="UP000007021">
    <property type="component" value="Segment"/>
</dbReference>
<accession>Q6R7E3</accession>
<protein>
    <recommendedName>
        <fullName>Uncharacterized protein ORF86</fullName>
    </recommendedName>
</protein>
<organism>
    <name type="scientific">Ostreid herpesvirus 1 (isolate France)</name>
    <name type="common">OsHV-1</name>
    <name type="synonym">Pacific oyster herpesvirus</name>
    <dbReference type="NCBI Taxonomy" id="654903"/>
    <lineage>
        <taxon>Viruses</taxon>
        <taxon>Duplodnaviria</taxon>
        <taxon>Heunggongvirae</taxon>
        <taxon>Peploviricota</taxon>
        <taxon>Herviviricetes</taxon>
        <taxon>Herpesvirales</taxon>
        <taxon>Malacoherpesviridae</taxon>
        <taxon>Ostreavirus</taxon>
        <taxon>Ostreavirus ostreidmalaco1</taxon>
        <taxon>Ostreid herpesvirus 1</taxon>
    </lineage>
</organism>
<name>Y086_OSHVF</name>
<feature type="chain" id="PRO_0000385107" description="Uncharacterized protein ORF86">
    <location>
        <begin position="1"/>
        <end position="135"/>
    </location>
</feature>
<reference key="1">
    <citation type="journal article" date="2005" name="J. Gen. Virol.">
        <title>A novel class of herpesvirus with bivalve hosts.</title>
        <authorList>
            <person name="Davison A.J."/>
            <person name="Trus B.L."/>
            <person name="Cheng N."/>
            <person name="Steven A.C."/>
            <person name="Watson M.S."/>
            <person name="Cunningham C."/>
            <person name="Le Deuff R.M."/>
            <person name="Renault T."/>
        </authorList>
    </citation>
    <scope>NUCLEOTIDE SEQUENCE [LARGE SCALE GENOMIC DNA]</scope>
</reference>